<dbReference type="EC" id="2.7.1.148" evidence="1"/>
<dbReference type="EMBL" id="CP000716">
    <property type="protein sequence ID" value="ABR30190.1"/>
    <property type="molecule type" value="Genomic_DNA"/>
</dbReference>
<dbReference type="RefSeq" id="WP_012056551.1">
    <property type="nucleotide sequence ID" value="NC_009616.1"/>
</dbReference>
<dbReference type="SMR" id="A6LJT9"/>
<dbReference type="STRING" id="391009.Tmel_0318"/>
<dbReference type="KEGG" id="tme:Tmel_0318"/>
<dbReference type="eggNOG" id="COG1947">
    <property type="taxonomic scope" value="Bacteria"/>
</dbReference>
<dbReference type="HOGENOM" id="CLU_053057_2_0_0"/>
<dbReference type="OrthoDB" id="9809438at2"/>
<dbReference type="UniPathway" id="UPA00056">
    <property type="reaction ID" value="UER00094"/>
</dbReference>
<dbReference type="Proteomes" id="UP000001110">
    <property type="component" value="Chromosome"/>
</dbReference>
<dbReference type="GO" id="GO:0050515">
    <property type="term" value="F:4-(cytidine 5'-diphospho)-2-C-methyl-D-erythritol kinase activity"/>
    <property type="evidence" value="ECO:0007669"/>
    <property type="project" value="UniProtKB-UniRule"/>
</dbReference>
<dbReference type="GO" id="GO:0005524">
    <property type="term" value="F:ATP binding"/>
    <property type="evidence" value="ECO:0007669"/>
    <property type="project" value="UniProtKB-UniRule"/>
</dbReference>
<dbReference type="GO" id="GO:0019288">
    <property type="term" value="P:isopentenyl diphosphate biosynthetic process, methylerythritol 4-phosphate pathway"/>
    <property type="evidence" value="ECO:0007669"/>
    <property type="project" value="UniProtKB-UniRule"/>
</dbReference>
<dbReference type="GO" id="GO:0016114">
    <property type="term" value="P:terpenoid biosynthetic process"/>
    <property type="evidence" value="ECO:0007669"/>
    <property type="project" value="InterPro"/>
</dbReference>
<dbReference type="Gene3D" id="3.30.230.10">
    <property type="match status" value="1"/>
</dbReference>
<dbReference type="Gene3D" id="3.30.70.890">
    <property type="entry name" value="GHMP kinase, C-terminal domain"/>
    <property type="match status" value="1"/>
</dbReference>
<dbReference type="HAMAP" id="MF_00061">
    <property type="entry name" value="IspE"/>
    <property type="match status" value="1"/>
</dbReference>
<dbReference type="InterPro" id="IPR013750">
    <property type="entry name" value="GHMP_kinase_C_dom"/>
</dbReference>
<dbReference type="InterPro" id="IPR036554">
    <property type="entry name" value="GHMP_kinase_C_sf"/>
</dbReference>
<dbReference type="InterPro" id="IPR006204">
    <property type="entry name" value="GHMP_kinase_N_dom"/>
</dbReference>
<dbReference type="InterPro" id="IPR004424">
    <property type="entry name" value="IspE"/>
</dbReference>
<dbReference type="InterPro" id="IPR020568">
    <property type="entry name" value="Ribosomal_Su5_D2-typ_SF"/>
</dbReference>
<dbReference type="InterPro" id="IPR014721">
    <property type="entry name" value="Ribsml_uS5_D2-typ_fold_subgr"/>
</dbReference>
<dbReference type="NCBIfam" id="TIGR00154">
    <property type="entry name" value="ispE"/>
    <property type="match status" value="1"/>
</dbReference>
<dbReference type="PANTHER" id="PTHR43527">
    <property type="entry name" value="4-DIPHOSPHOCYTIDYL-2-C-METHYL-D-ERYTHRITOL KINASE, CHLOROPLASTIC"/>
    <property type="match status" value="1"/>
</dbReference>
<dbReference type="PANTHER" id="PTHR43527:SF2">
    <property type="entry name" value="4-DIPHOSPHOCYTIDYL-2-C-METHYL-D-ERYTHRITOL KINASE, CHLOROPLASTIC"/>
    <property type="match status" value="1"/>
</dbReference>
<dbReference type="Pfam" id="PF08544">
    <property type="entry name" value="GHMP_kinases_C"/>
    <property type="match status" value="1"/>
</dbReference>
<dbReference type="Pfam" id="PF00288">
    <property type="entry name" value="GHMP_kinases_N"/>
    <property type="match status" value="1"/>
</dbReference>
<dbReference type="PIRSF" id="PIRSF010376">
    <property type="entry name" value="IspE"/>
    <property type="match status" value="1"/>
</dbReference>
<dbReference type="SUPFAM" id="SSF55060">
    <property type="entry name" value="GHMP Kinase, C-terminal domain"/>
    <property type="match status" value="1"/>
</dbReference>
<dbReference type="SUPFAM" id="SSF54211">
    <property type="entry name" value="Ribosomal protein S5 domain 2-like"/>
    <property type="match status" value="1"/>
</dbReference>
<comment type="function">
    <text evidence="1">Catalyzes the phosphorylation of the position 2 hydroxy group of 4-diphosphocytidyl-2C-methyl-D-erythritol.</text>
</comment>
<comment type="catalytic activity">
    <reaction evidence="1">
        <text>4-CDP-2-C-methyl-D-erythritol + ATP = 4-CDP-2-C-methyl-D-erythritol 2-phosphate + ADP + H(+)</text>
        <dbReference type="Rhea" id="RHEA:18437"/>
        <dbReference type="ChEBI" id="CHEBI:15378"/>
        <dbReference type="ChEBI" id="CHEBI:30616"/>
        <dbReference type="ChEBI" id="CHEBI:57823"/>
        <dbReference type="ChEBI" id="CHEBI:57919"/>
        <dbReference type="ChEBI" id="CHEBI:456216"/>
        <dbReference type="EC" id="2.7.1.148"/>
    </reaction>
</comment>
<comment type="pathway">
    <text evidence="1">Isoprenoid biosynthesis; isopentenyl diphosphate biosynthesis via DXP pathway; isopentenyl diphosphate from 1-deoxy-D-xylulose 5-phosphate: step 3/6.</text>
</comment>
<comment type="similarity">
    <text evidence="1">Belongs to the GHMP kinase family. IspE subfamily.</text>
</comment>
<evidence type="ECO:0000255" key="1">
    <source>
        <dbReference type="HAMAP-Rule" id="MF_00061"/>
    </source>
</evidence>
<gene>
    <name evidence="1" type="primary">ispE</name>
    <name type="ordered locus">Tmel_0318</name>
</gene>
<organism>
    <name type="scientific">Thermosipho melanesiensis (strain DSM 12029 / CIP 104789 / BI429)</name>
    <dbReference type="NCBI Taxonomy" id="391009"/>
    <lineage>
        <taxon>Bacteria</taxon>
        <taxon>Thermotogati</taxon>
        <taxon>Thermotogota</taxon>
        <taxon>Thermotogae</taxon>
        <taxon>Thermotogales</taxon>
        <taxon>Fervidobacteriaceae</taxon>
        <taxon>Thermosipho</taxon>
    </lineage>
</organism>
<name>ISPE_THEM4</name>
<accession>A6LJT9</accession>
<reference key="1">
    <citation type="submission" date="2007-05" db="EMBL/GenBank/DDBJ databases">
        <title>Complete sequence of Thermosipho melanesiensis BI429.</title>
        <authorList>
            <consortium name="US DOE Joint Genome Institute"/>
            <person name="Copeland A."/>
            <person name="Lucas S."/>
            <person name="Lapidus A."/>
            <person name="Barry K."/>
            <person name="Glavina del Rio T."/>
            <person name="Dalin E."/>
            <person name="Tice H."/>
            <person name="Pitluck S."/>
            <person name="Chertkov O."/>
            <person name="Brettin T."/>
            <person name="Bruce D."/>
            <person name="Detter J.C."/>
            <person name="Han C."/>
            <person name="Schmutz J."/>
            <person name="Larimer F."/>
            <person name="Land M."/>
            <person name="Hauser L."/>
            <person name="Kyrpides N."/>
            <person name="Mikhailova N."/>
            <person name="Nelson K."/>
            <person name="Gogarten J.P."/>
            <person name="Noll K."/>
            <person name="Richardson P."/>
        </authorList>
    </citation>
    <scope>NUCLEOTIDE SEQUENCE [LARGE SCALE GENOMIC DNA]</scope>
    <source>
        <strain>DSM 12029 / CIP 104789 / BI429</strain>
    </source>
</reference>
<protein>
    <recommendedName>
        <fullName evidence="1">4-diphosphocytidyl-2-C-methyl-D-erythritol kinase</fullName>
        <shortName evidence="1">CMK</shortName>
        <ecNumber evidence="1">2.7.1.148</ecNumber>
    </recommendedName>
    <alternativeName>
        <fullName evidence="1">4-(cytidine-5'-diphospho)-2-C-methyl-D-erythritol kinase</fullName>
    </alternativeName>
</protein>
<proteinExistence type="inferred from homology"/>
<feature type="chain" id="PRO_0000335767" description="4-diphosphocytidyl-2-C-methyl-D-erythritol kinase">
    <location>
        <begin position="1"/>
        <end position="274"/>
    </location>
</feature>
<feature type="active site" evidence="1">
    <location>
        <position position="14"/>
    </location>
</feature>
<feature type="active site" evidence="1">
    <location>
        <position position="134"/>
    </location>
</feature>
<feature type="binding site" evidence="1">
    <location>
        <begin position="94"/>
        <end position="104"/>
    </location>
    <ligand>
        <name>ATP</name>
        <dbReference type="ChEBI" id="CHEBI:30616"/>
    </ligand>
</feature>
<keyword id="KW-0067">ATP-binding</keyword>
<keyword id="KW-0414">Isoprene biosynthesis</keyword>
<keyword id="KW-0418">Kinase</keyword>
<keyword id="KW-0547">Nucleotide-binding</keyword>
<keyword id="KW-0808">Transferase</keyword>
<sequence>MEQSSGAVIRSYAKINLFLDVTKKRDDGYHEILSLFQNISLYDRLIITKIDRGLEIKTNVDIENNILYKTWDVFSSNFKEPEFGLRIVLEKNIPMQAGLGGGSSNAAALLFYLSDQLKIPKNKIIKIAAKIGSDVPFFLIGGTAVVKGKGEIIEPLPPLLGYYVKLITANGISTKEAYNLLNSTLFNKAPCSPYALYEAYYHRNIDEIKRCTYNIFEKVIAKQNREIAQNIKKLKKNSIVSTLTGSGSAVYGISFREGDFNFVPRGVEYEEINI</sequence>